<organism>
    <name type="scientific">Francisella tularensis subsp. tularensis (strain SCHU S4 / Schu 4)</name>
    <dbReference type="NCBI Taxonomy" id="177416"/>
    <lineage>
        <taxon>Bacteria</taxon>
        <taxon>Pseudomonadati</taxon>
        <taxon>Pseudomonadota</taxon>
        <taxon>Gammaproteobacteria</taxon>
        <taxon>Thiotrichales</taxon>
        <taxon>Francisellaceae</taxon>
        <taxon>Francisella</taxon>
    </lineage>
</organism>
<keyword id="KW-0131">Cell cycle</keyword>
<keyword id="KW-0132">Cell division</keyword>
<keyword id="KW-0997">Cell inner membrane</keyword>
<keyword id="KW-1003">Cell membrane</keyword>
<keyword id="KW-0133">Cell shape</keyword>
<keyword id="KW-0961">Cell wall biogenesis/degradation</keyword>
<keyword id="KW-0328">Glycosyltransferase</keyword>
<keyword id="KW-0472">Membrane</keyword>
<keyword id="KW-0573">Peptidoglycan synthesis</keyword>
<keyword id="KW-1185">Reference proteome</keyword>
<keyword id="KW-0808">Transferase</keyword>
<reference key="1">
    <citation type="journal article" date="2005" name="Nat. Genet.">
        <title>The complete genome sequence of Francisella tularensis, the causative agent of tularemia.</title>
        <authorList>
            <person name="Larsson P."/>
            <person name="Oyston P.C.F."/>
            <person name="Chain P."/>
            <person name="Chu M.C."/>
            <person name="Duffield M."/>
            <person name="Fuxelius H.-H."/>
            <person name="Garcia E."/>
            <person name="Haelltorp G."/>
            <person name="Johansson D."/>
            <person name="Isherwood K.E."/>
            <person name="Karp P.D."/>
            <person name="Larsson E."/>
            <person name="Liu Y."/>
            <person name="Michell S."/>
            <person name="Prior J."/>
            <person name="Prior R."/>
            <person name="Malfatti S."/>
            <person name="Sjoestedt A."/>
            <person name="Svensson K."/>
            <person name="Thompson N."/>
            <person name="Vergez L."/>
            <person name="Wagg J.K."/>
            <person name="Wren B.W."/>
            <person name="Lindler L.E."/>
            <person name="Andersson S.G.E."/>
            <person name="Forsman M."/>
            <person name="Titball R.W."/>
        </authorList>
    </citation>
    <scope>NUCLEOTIDE SEQUENCE [LARGE SCALE GENOMIC DNA]</scope>
    <source>
        <strain>SCHU S4 / Schu 4</strain>
    </source>
</reference>
<proteinExistence type="inferred from homology"/>
<dbReference type="EC" id="2.4.1.227" evidence="1"/>
<dbReference type="EMBL" id="AJ749949">
    <property type="protein sequence ID" value="CAG45444.1"/>
    <property type="molecule type" value="Genomic_DNA"/>
</dbReference>
<dbReference type="RefSeq" id="WP_003020739.1">
    <property type="nucleotide sequence ID" value="NC_006570.2"/>
</dbReference>
<dbReference type="RefSeq" id="YP_169818.1">
    <property type="nucleotide sequence ID" value="NC_006570.2"/>
</dbReference>
<dbReference type="SMR" id="Q5NGM4"/>
<dbReference type="STRING" id="177416.FTT_0811c"/>
<dbReference type="CAZy" id="GT28">
    <property type="family name" value="Glycosyltransferase Family 28"/>
</dbReference>
<dbReference type="DNASU" id="3192028"/>
<dbReference type="EnsemblBacteria" id="CAG45444">
    <property type="protein sequence ID" value="CAG45444"/>
    <property type="gene ID" value="FTT_0811c"/>
</dbReference>
<dbReference type="KEGG" id="ftu:FTT_0811c"/>
<dbReference type="eggNOG" id="COG0707">
    <property type="taxonomic scope" value="Bacteria"/>
</dbReference>
<dbReference type="OrthoDB" id="9808936at2"/>
<dbReference type="UniPathway" id="UPA00219"/>
<dbReference type="Proteomes" id="UP000001174">
    <property type="component" value="Chromosome"/>
</dbReference>
<dbReference type="GO" id="GO:0005886">
    <property type="term" value="C:plasma membrane"/>
    <property type="evidence" value="ECO:0007669"/>
    <property type="project" value="UniProtKB-SubCell"/>
</dbReference>
<dbReference type="GO" id="GO:0051991">
    <property type="term" value="F:UDP-N-acetyl-D-glucosamine:N-acetylmuramoyl-L-alanyl-D-glutamyl-meso-2,6-diaminopimelyl-D-alanyl-D-alanine-diphosphoundecaprenol 4-beta-N-acetylglucosaminlytransferase activity"/>
    <property type="evidence" value="ECO:0007669"/>
    <property type="project" value="RHEA"/>
</dbReference>
<dbReference type="GO" id="GO:0050511">
    <property type="term" value="F:undecaprenyldiphospho-muramoylpentapeptide beta-N-acetylglucosaminyltransferase activity"/>
    <property type="evidence" value="ECO:0007669"/>
    <property type="project" value="UniProtKB-UniRule"/>
</dbReference>
<dbReference type="GO" id="GO:0005975">
    <property type="term" value="P:carbohydrate metabolic process"/>
    <property type="evidence" value="ECO:0007669"/>
    <property type="project" value="InterPro"/>
</dbReference>
<dbReference type="GO" id="GO:0051301">
    <property type="term" value="P:cell division"/>
    <property type="evidence" value="ECO:0007669"/>
    <property type="project" value="UniProtKB-KW"/>
</dbReference>
<dbReference type="GO" id="GO:0071555">
    <property type="term" value="P:cell wall organization"/>
    <property type="evidence" value="ECO:0007669"/>
    <property type="project" value="UniProtKB-KW"/>
</dbReference>
<dbReference type="GO" id="GO:0030259">
    <property type="term" value="P:lipid glycosylation"/>
    <property type="evidence" value="ECO:0007669"/>
    <property type="project" value="UniProtKB-UniRule"/>
</dbReference>
<dbReference type="GO" id="GO:0009252">
    <property type="term" value="P:peptidoglycan biosynthetic process"/>
    <property type="evidence" value="ECO:0007669"/>
    <property type="project" value="UniProtKB-UniRule"/>
</dbReference>
<dbReference type="GO" id="GO:0008360">
    <property type="term" value="P:regulation of cell shape"/>
    <property type="evidence" value="ECO:0007669"/>
    <property type="project" value="UniProtKB-KW"/>
</dbReference>
<dbReference type="CDD" id="cd03785">
    <property type="entry name" value="GT28_MurG"/>
    <property type="match status" value="1"/>
</dbReference>
<dbReference type="Gene3D" id="3.40.50.2000">
    <property type="entry name" value="Glycogen Phosphorylase B"/>
    <property type="match status" value="2"/>
</dbReference>
<dbReference type="HAMAP" id="MF_00033">
    <property type="entry name" value="MurG"/>
    <property type="match status" value="1"/>
</dbReference>
<dbReference type="InterPro" id="IPR006009">
    <property type="entry name" value="GlcNAc_MurG"/>
</dbReference>
<dbReference type="InterPro" id="IPR007235">
    <property type="entry name" value="Glyco_trans_28_C"/>
</dbReference>
<dbReference type="InterPro" id="IPR004276">
    <property type="entry name" value="GlycoTrans_28_N"/>
</dbReference>
<dbReference type="NCBIfam" id="TIGR01133">
    <property type="entry name" value="murG"/>
    <property type="match status" value="1"/>
</dbReference>
<dbReference type="PANTHER" id="PTHR21015:SF22">
    <property type="entry name" value="GLYCOSYLTRANSFERASE"/>
    <property type="match status" value="1"/>
</dbReference>
<dbReference type="PANTHER" id="PTHR21015">
    <property type="entry name" value="UDP-N-ACETYLGLUCOSAMINE--N-ACETYLMURAMYL-(PENTAPEPTIDE) PYROPHOSPHORYL-UNDECAPRENOL N-ACETYLGLUCOSAMINE TRANSFERASE 1"/>
    <property type="match status" value="1"/>
</dbReference>
<dbReference type="Pfam" id="PF04101">
    <property type="entry name" value="Glyco_tran_28_C"/>
    <property type="match status" value="1"/>
</dbReference>
<dbReference type="Pfam" id="PF03033">
    <property type="entry name" value="Glyco_transf_28"/>
    <property type="match status" value="1"/>
</dbReference>
<dbReference type="SUPFAM" id="SSF53756">
    <property type="entry name" value="UDP-Glycosyltransferase/glycogen phosphorylase"/>
    <property type="match status" value="1"/>
</dbReference>
<comment type="function">
    <text evidence="1">Cell wall formation. Catalyzes the transfer of a GlcNAc subunit on undecaprenyl-pyrophosphoryl-MurNAc-pentapeptide (lipid intermediate I) to form undecaprenyl-pyrophosphoryl-MurNAc-(pentapeptide)GlcNAc (lipid intermediate II).</text>
</comment>
<comment type="catalytic activity">
    <reaction evidence="1">
        <text>di-trans,octa-cis-undecaprenyl diphospho-N-acetyl-alpha-D-muramoyl-L-alanyl-D-glutamyl-meso-2,6-diaminopimeloyl-D-alanyl-D-alanine + UDP-N-acetyl-alpha-D-glucosamine = di-trans,octa-cis-undecaprenyl diphospho-[N-acetyl-alpha-D-glucosaminyl-(1-&gt;4)]-N-acetyl-alpha-D-muramoyl-L-alanyl-D-glutamyl-meso-2,6-diaminopimeloyl-D-alanyl-D-alanine + UDP + H(+)</text>
        <dbReference type="Rhea" id="RHEA:31227"/>
        <dbReference type="ChEBI" id="CHEBI:15378"/>
        <dbReference type="ChEBI" id="CHEBI:57705"/>
        <dbReference type="ChEBI" id="CHEBI:58223"/>
        <dbReference type="ChEBI" id="CHEBI:61387"/>
        <dbReference type="ChEBI" id="CHEBI:61388"/>
        <dbReference type="EC" id="2.4.1.227"/>
    </reaction>
</comment>
<comment type="pathway">
    <text evidence="1">Cell wall biogenesis; peptidoglycan biosynthesis.</text>
</comment>
<comment type="subcellular location">
    <subcellularLocation>
        <location evidence="1">Cell inner membrane</location>
        <topology evidence="1">Peripheral membrane protein</topology>
        <orientation evidence="1">Cytoplasmic side</orientation>
    </subcellularLocation>
</comment>
<comment type="similarity">
    <text evidence="1">Belongs to the glycosyltransferase 28 family. MurG subfamily.</text>
</comment>
<gene>
    <name evidence="1" type="primary">murG</name>
    <name type="ordered locus">FTT_0811c</name>
</gene>
<name>MURG_FRATT</name>
<feature type="chain" id="PRO_0000225054" description="UDP-N-acetylglucosamine--N-acetylmuramyl-(pentapeptide) pyrophosphoryl-undecaprenol N-acetylglucosamine transferase">
    <location>
        <begin position="1"/>
        <end position="371"/>
    </location>
</feature>
<feature type="binding site" evidence="1">
    <location>
        <begin position="15"/>
        <end position="17"/>
    </location>
    <ligand>
        <name>UDP-N-acetyl-alpha-D-glucosamine</name>
        <dbReference type="ChEBI" id="CHEBI:57705"/>
    </ligand>
</feature>
<feature type="binding site" evidence="1">
    <location>
        <position position="126"/>
    </location>
    <ligand>
        <name>UDP-N-acetyl-alpha-D-glucosamine</name>
        <dbReference type="ChEBI" id="CHEBI:57705"/>
    </ligand>
</feature>
<feature type="binding site" evidence="1">
    <location>
        <position position="172"/>
    </location>
    <ligand>
        <name>UDP-N-acetyl-alpha-D-glucosamine</name>
        <dbReference type="ChEBI" id="CHEBI:57705"/>
    </ligand>
</feature>
<feature type="binding site" evidence="1">
    <location>
        <position position="199"/>
    </location>
    <ligand>
        <name>UDP-N-acetyl-alpha-D-glucosamine</name>
        <dbReference type="ChEBI" id="CHEBI:57705"/>
    </ligand>
</feature>
<feature type="binding site" evidence="1">
    <location>
        <position position="256"/>
    </location>
    <ligand>
        <name>UDP-N-acetyl-alpha-D-glucosamine</name>
        <dbReference type="ChEBI" id="CHEBI:57705"/>
    </ligand>
</feature>
<feature type="binding site" evidence="1">
    <location>
        <begin position="275"/>
        <end position="280"/>
    </location>
    <ligand>
        <name>UDP-N-acetyl-alpha-D-glucosamine</name>
        <dbReference type="ChEBI" id="CHEBI:57705"/>
    </ligand>
</feature>
<feature type="binding site" evidence="1">
    <location>
        <position position="301"/>
    </location>
    <ligand>
        <name>UDP-N-acetyl-alpha-D-glucosamine</name>
        <dbReference type="ChEBI" id="CHEBI:57705"/>
    </ligand>
</feature>
<evidence type="ECO:0000255" key="1">
    <source>
        <dbReference type="HAMAP-Rule" id="MF_00033"/>
    </source>
</evidence>
<sequence length="371" mass="40871">MSLENKNIIITAGGTGGHIYPALAIAELLRQNKANVTWVGTPNNMEASIVPEYFNIQFIKSSGVRRKGIIKKITFPLKLAYNTLKSRSLLKKLKADLVIGFGGYVSGPICLAAAQINIPVIIHEQNAKIGLTNRILAKFATTICLAFEIENLHKQFSSKQLAKTKIVGNPVRKEIVALNDKARIYTDSSTLKILVLGGSQGAKAINEIIPKLIQKSNEQGINIKVWHQTGKLSLEETKDAYKDISQNHIKDIAAFIDDMAIAYNWADLVICRAGALTVSECAIAGLPAIFIPLPSAVDDHQFFNAQNIVNNNAGFCLRQQQMTLENLLAIIKPLNQDRSKLEQMSKMAKKTLIKNSSEQILDCVKKILNNK</sequence>
<accession>Q5NGM4</accession>
<protein>
    <recommendedName>
        <fullName evidence="1">UDP-N-acetylglucosamine--N-acetylmuramyl-(pentapeptide) pyrophosphoryl-undecaprenol N-acetylglucosamine transferase</fullName>
        <ecNumber evidence="1">2.4.1.227</ecNumber>
    </recommendedName>
    <alternativeName>
        <fullName evidence="1">Undecaprenyl-PP-MurNAc-pentapeptide-UDPGlcNAc GlcNAc transferase</fullName>
    </alternativeName>
</protein>